<evidence type="ECO:0000255" key="1">
    <source>
        <dbReference type="HAMAP-Rule" id="MF_01347"/>
    </source>
</evidence>
<protein>
    <recommendedName>
        <fullName evidence="1">ATP synthase subunit beta</fullName>
        <ecNumber evidence="1">7.1.2.2</ecNumber>
    </recommendedName>
    <alternativeName>
        <fullName evidence="1">ATP synthase F1 sector subunit beta</fullName>
    </alternativeName>
    <alternativeName>
        <fullName evidence="1">F-ATPase subunit beta</fullName>
    </alternativeName>
</protein>
<dbReference type="EC" id="7.1.2.2" evidence="1"/>
<dbReference type="EMBL" id="CP000262">
    <property type="protein sequence ID" value="ABF37615.1"/>
    <property type="molecule type" value="Genomic_DNA"/>
</dbReference>
<dbReference type="SMR" id="Q1J7F9"/>
<dbReference type="KEGG" id="spi:MGAS10750_Spy0665"/>
<dbReference type="HOGENOM" id="CLU_022398_0_2_9"/>
<dbReference type="Proteomes" id="UP000002434">
    <property type="component" value="Chromosome"/>
</dbReference>
<dbReference type="GO" id="GO:0005886">
    <property type="term" value="C:plasma membrane"/>
    <property type="evidence" value="ECO:0007669"/>
    <property type="project" value="UniProtKB-SubCell"/>
</dbReference>
<dbReference type="GO" id="GO:0045259">
    <property type="term" value="C:proton-transporting ATP synthase complex"/>
    <property type="evidence" value="ECO:0007669"/>
    <property type="project" value="UniProtKB-KW"/>
</dbReference>
<dbReference type="GO" id="GO:0005524">
    <property type="term" value="F:ATP binding"/>
    <property type="evidence" value="ECO:0007669"/>
    <property type="project" value="UniProtKB-UniRule"/>
</dbReference>
<dbReference type="GO" id="GO:0016887">
    <property type="term" value="F:ATP hydrolysis activity"/>
    <property type="evidence" value="ECO:0007669"/>
    <property type="project" value="InterPro"/>
</dbReference>
<dbReference type="GO" id="GO:0046933">
    <property type="term" value="F:proton-transporting ATP synthase activity, rotational mechanism"/>
    <property type="evidence" value="ECO:0007669"/>
    <property type="project" value="UniProtKB-UniRule"/>
</dbReference>
<dbReference type="CDD" id="cd18110">
    <property type="entry name" value="ATP-synt_F1_beta_C"/>
    <property type="match status" value="1"/>
</dbReference>
<dbReference type="CDD" id="cd18115">
    <property type="entry name" value="ATP-synt_F1_beta_N"/>
    <property type="match status" value="1"/>
</dbReference>
<dbReference type="CDD" id="cd01133">
    <property type="entry name" value="F1-ATPase_beta_CD"/>
    <property type="match status" value="1"/>
</dbReference>
<dbReference type="FunFam" id="1.10.1140.10:FF:000001">
    <property type="entry name" value="ATP synthase subunit beta"/>
    <property type="match status" value="1"/>
</dbReference>
<dbReference type="FunFam" id="2.40.10.170:FF:000005">
    <property type="entry name" value="ATP synthase subunit beta"/>
    <property type="match status" value="1"/>
</dbReference>
<dbReference type="FunFam" id="3.40.50.300:FF:000004">
    <property type="entry name" value="ATP synthase subunit beta"/>
    <property type="match status" value="1"/>
</dbReference>
<dbReference type="Gene3D" id="2.40.10.170">
    <property type="match status" value="1"/>
</dbReference>
<dbReference type="Gene3D" id="1.10.1140.10">
    <property type="entry name" value="Bovine Mitochondrial F1-atpase, Atp Synthase Beta Chain, Chain D, domain 3"/>
    <property type="match status" value="1"/>
</dbReference>
<dbReference type="Gene3D" id="3.40.50.300">
    <property type="entry name" value="P-loop containing nucleotide triphosphate hydrolases"/>
    <property type="match status" value="1"/>
</dbReference>
<dbReference type="HAMAP" id="MF_01347">
    <property type="entry name" value="ATP_synth_beta_bact"/>
    <property type="match status" value="1"/>
</dbReference>
<dbReference type="InterPro" id="IPR003593">
    <property type="entry name" value="AAA+_ATPase"/>
</dbReference>
<dbReference type="InterPro" id="IPR055190">
    <property type="entry name" value="ATP-synt_VA_C"/>
</dbReference>
<dbReference type="InterPro" id="IPR005722">
    <property type="entry name" value="ATP_synth_F1_bsu"/>
</dbReference>
<dbReference type="InterPro" id="IPR020003">
    <property type="entry name" value="ATPase_a/bsu_AS"/>
</dbReference>
<dbReference type="InterPro" id="IPR050053">
    <property type="entry name" value="ATPase_alpha/beta_chains"/>
</dbReference>
<dbReference type="InterPro" id="IPR004100">
    <property type="entry name" value="ATPase_F1/V1/A1_a/bsu_N"/>
</dbReference>
<dbReference type="InterPro" id="IPR036121">
    <property type="entry name" value="ATPase_F1/V1/A1_a/bsu_N_sf"/>
</dbReference>
<dbReference type="InterPro" id="IPR000194">
    <property type="entry name" value="ATPase_F1/V1/A1_a/bsu_nucl-bd"/>
</dbReference>
<dbReference type="InterPro" id="IPR024034">
    <property type="entry name" value="ATPase_F1/V1_b/a_C"/>
</dbReference>
<dbReference type="InterPro" id="IPR027417">
    <property type="entry name" value="P-loop_NTPase"/>
</dbReference>
<dbReference type="NCBIfam" id="TIGR01039">
    <property type="entry name" value="atpD"/>
    <property type="match status" value="1"/>
</dbReference>
<dbReference type="PANTHER" id="PTHR15184">
    <property type="entry name" value="ATP SYNTHASE"/>
    <property type="match status" value="1"/>
</dbReference>
<dbReference type="PANTHER" id="PTHR15184:SF71">
    <property type="entry name" value="ATP SYNTHASE SUBUNIT BETA, MITOCHONDRIAL"/>
    <property type="match status" value="1"/>
</dbReference>
<dbReference type="Pfam" id="PF00006">
    <property type="entry name" value="ATP-synt_ab"/>
    <property type="match status" value="1"/>
</dbReference>
<dbReference type="Pfam" id="PF02874">
    <property type="entry name" value="ATP-synt_ab_N"/>
    <property type="match status" value="1"/>
</dbReference>
<dbReference type="Pfam" id="PF22919">
    <property type="entry name" value="ATP-synt_VA_C"/>
    <property type="match status" value="1"/>
</dbReference>
<dbReference type="SMART" id="SM00382">
    <property type="entry name" value="AAA"/>
    <property type="match status" value="1"/>
</dbReference>
<dbReference type="SUPFAM" id="SSF47917">
    <property type="entry name" value="C-terminal domain of alpha and beta subunits of F1 ATP synthase"/>
    <property type="match status" value="1"/>
</dbReference>
<dbReference type="SUPFAM" id="SSF50615">
    <property type="entry name" value="N-terminal domain of alpha and beta subunits of F1 ATP synthase"/>
    <property type="match status" value="1"/>
</dbReference>
<dbReference type="SUPFAM" id="SSF52540">
    <property type="entry name" value="P-loop containing nucleoside triphosphate hydrolases"/>
    <property type="match status" value="1"/>
</dbReference>
<dbReference type="PROSITE" id="PS00152">
    <property type="entry name" value="ATPASE_ALPHA_BETA"/>
    <property type="match status" value="1"/>
</dbReference>
<proteinExistence type="inferred from homology"/>
<gene>
    <name evidence="1" type="primary">atpD</name>
    <name type="ordered locus">MGAS10750_Spy0665</name>
</gene>
<feature type="chain" id="PRO_0000254398" description="ATP synthase subunit beta">
    <location>
        <begin position="1"/>
        <end position="468"/>
    </location>
</feature>
<feature type="binding site" evidence="1">
    <location>
        <begin position="155"/>
        <end position="162"/>
    </location>
    <ligand>
        <name>ATP</name>
        <dbReference type="ChEBI" id="CHEBI:30616"/>
    </ligand>
</feature>
<keyword id="KW-0066">ATP synthesis</keyword>
<keyword id="KW-0067">ATP-binding</keyword>
<keyword id="KW-1003">Cell membrane</keyword>
<keyword id="KW-0139">CF(1)</keyword>
<keyword id="KW-0375">Hydrogen ion transport</keyword>
<keyword id="KW-0406">Ion transport</keyword>
<keyword id="KW-0472">Membrane</keyword>
<keyword id="KW-0547">Nucleotide-binding</keyword>
<keyword id="KW-1278">Translocase</keyword>
<keyword id="KW-0813">Transport</keyword>
<reference key="1">
    <citation type="journal article" date="2006" name="Proc. Natl. Acad. Sci. U.S.A.">
        <title>Molecular genetic anatomy of inter- and intraserotype variation in the human bacterial pathogen group A Streptococcus.</title>
        <authorList>
            <person name="Beres S.B."/>
            <person name="Richter E.W."/>
            <person name="Nagiec M.J."/>
            <person name="Sumby P."/>
            <person name="Porcella S.F."/>
            <person name="DeLeo F.R."/>
            <person name="Musser J.M."/>
        </authorList>
    </citation>
    <scope>NUCLEOTIDE SEQUENCE [LARGE SCALE GENOMIC DNA]</scope>
    <source>
        <strain>MGAS10750</strain>
    </source>
</reference>
<organism>
    <name type="scientific">Streptococcus pyogenes serotype M4 (strain MGAS10750)</name>
    <dbReference type="NCBI Taxonomy" id="370554"/>
    <lineage>
        <taxon>Bacteria</taxon>
        <taxon>Bacillati</taxon>
        <taxon>Bacillota</taxon>
        <taxon>Bacilli</taxon>
        <taxon>Lactobacillales</taxon>
        <taxon>Streptococcaceae</taxon>
        <taxon>Streptococcus</taxon>
    </lineage>
</organism>
<comment type="function">
    <text evidence="1">Produces ATP from ADP in the presence of a proton gradient across the membrane. The catalytic sites are hosted primarily by the beta subunits.</text>
</comment>
<comment type="catalytic activity">
    <reaction evidence="1">
        <text>ATP + H2O + 4 H(+)(in) = ADP + phosphate + 5 H(+)(out)</text>
        <dbReference type="Rhea" id="RHEA:57720"/>
        <dbReference type="ChEBI" id="CHEBI:15377"/>
        <dbReference type="ChEBI" id="CHEBI:15378"/>
        <dbReference type="ChEBI" id="CHEBI:30616"/>
        <dbReference type="ChEBI" id="CHEBI:43474"/>
        <dbReference type="ChEBI" id="CHEBI:456216"/>
        <dbReference type="EC" id="7.1.2.2"/>
    </reaction>
</comment>
<comment type="subunit">
    <text evidence="1">F-type ATPases have 2 components, CF(1) - the catalytic core - and CF(0) - the membrane proton channel. CF(1) has five subunits: alpha(3), beta(3), gamma(1), delta(1), epsilon(1). CF(0) has three main subunits: a(1), b(2) and c(9-12). The alpha and beta chains form an alternating ring which encloses part of the gamma chain. CF(1) is attached to CF(0) by a central stalk formed by the gamma and epsilon chains, while a peripheral stalk is formed by the delta and b chains.</text>
</comment>
<comment type="subcellular location">
    <subcellularLocation>
        <location evidence="1">Cell membrane</location>
        <topology evidence="1">Peripheral membrane protein</topology>
    </subcellularLocation>
</comment>
<comment type="similarity">
    <text evidence="1">Belongs to the ATPase alpha/beta chains family.</text>
</comment>
<sequence length="468" mass="51077">MSSGKIAQVVGPVVDVMFASGDKLPEINNALIVYKDSDKKQKIVLEVALELGDGMVRTIAMESTDGLTRGLEVLDTGRAISVPVGKETLGRVFNVLGETIDLEEPFAEDVDRQPIHKKAPSFDELSTSSEILETGIKVIDLLAPYLKGGKVGLFGGAGVGKTVLIQELIHNIAQEHGGISVFTGVGERTREGNDLYWEMKESGVIEKTAMVFGQMNEPPGARMRVALTGLTIAEYFRDVEGQDVLLFIDNIFRFTQAGSEVSALLGRMPSAVGYQPTLATEMGQLQERITSTQKGSVTSIQAIYVPADDYTDPAPATAFAHLDSTTNLERKLTQMGIYPAVDPLASSSRALSPEIVGEEHYAVATEVQRVLQRYRELQDIIAILGMDELSDEEKTLVGRARRIQFFLSQNFNVAEQFTGLPGSYVPVAETVRGFKEILEGKYDHLPEDAFRSVGPIEDVIKKAEKMGF</sequence>
<name>ATPB_STRPF</name>
<accession>Q1J7F9</accession>